<keyword id="KW-1003">Cell membrane</keyword>
<keyword id="KW-0285">Flavoprotein</keyword>
<keyword id="KW-0288">FMN</keyword>
<keyword id="KW-0472">Membrane</keyword>
<keyword id="KW-0560">Oxidoreductase</keyword>
<keyword id="KW-0665">Pyrimidine biosynthesis</keyword>
<feature type="chain" id="PRO_1000024221" description="Dihydroorotate dehydrogenase (quinone)">
    <location>
        <begin position="1"/>
        <end position="339"/>
    </location>
</feature>
<feature type="active site" description="Nucleophile" evidence="1">
    <location>
        <position position="175"/>
    </location>
</feature>
<feature type="binding site" evidence="1">
    <location>
        <begin position="62"/>
        <end position="66"/>
    </location>
    <ligand>
        <name>FMN</name>
        <dbReference type="ChEBI" id="CHEBI:58210"/>
    </ligand>
</feature>
<feature type="binding site" evidence="1">
    <location>
        <position position="66"/>
    </location>
    <ligand>
        <name>substrate</name>
    </ligand>
</feature>
<feature type="binding site" evidence="1">
    <location>
        <position position="86"/>
    </location>
    <ligand>
        <name>FMN</name>
        <dbReference type="ChEBI" id="CHEBI:58210"/>
    </ligand>
</feature>
<feature type="binding site" evidence="1">
    <location>
        <begin position="111"/>
        <end position="115"/>
    </location>
    <ligand>
        <name>substrate</name>
    </ligand>
</feature>
<feature type="binding site" evidence="1">
    <location>
        <position position="139"/>
    </location>
    <ligand>
        <name>FMN</name>
        <dbReference type="ChEBI" id="CHEBI:58210"/>
    </ligand>
</feature>
<feature type="binding site" evidence="1">
    <location>
        <position position="172"/>
    </location>
    <ligand>
        <name>FMN</name>
        <dbReference type="ChEBI" id="CHEBI:58210"/>
    </ligand>
</feature>
<feature type="binding site" evidence="1">
    <location>
        <position position="172"/>
    </location>
    <ligand>
        <name>substrate</name>
    </ligand>
</feature>
<feature type="binding site" evidence="1">
    <location>
        <position position="177"/>
    </location>
    <ligand>
        <name>substrate</name>
    </ligand>
</feature>
<feature type="binding site" evidence="1">
    <location>
        <position position="217"/>
    </location>
    <ligand>
        <name>FMN</name>
        <dbReference type="ChEBI" id="CHEBI:58210"/>
    </ligand>
</feature>
<feature type="binding site" evidence="1">
    <location>
        <position position="245"/>
    </location>
    <ligand>
        <name>FMN</name>
        <dbReference type="ChEBI" id="CHEBI:58210"/>
    </ligand>
</feature>
<feature type="binding site" evidence="1">
    <location>
        <begin position="246"/>
        <end position="247"/>
    </location>
    <ligand>
        <name>substrate</name>
    </ligand>
</feature>
<feature type="binding site" evidence="1">
    <location>
        <position position="268"/>
    </location>
    <ligand>
        <name>FMN</name>
        <dbReference type="ChEBI" id="CHEBI:58210"/>
    </ligand>
</feature>
<feature type="binding site" evidence="1">
    <location>
        <position position="297"/>
    </location>
    <ligand>
        <name>FMN</name>
        <dbReference type="ChEBI" id="CHEBI:58210"/>
    </ligand>
</feature>
<feature type="binding site" evidence="1">
    <location>
        <begin position="318"/>
        <end position="319"/>
    </location>
    <ligand>
        <name>FMN</name>
        <dbReference type="ChEBI" id="CHEBI:58210"/>
    </ligand>
</feature>
<proteinExistence type="inferred from homology"/>
<reference key="1">
    <citation type="submission" date="2007-07" db="EMBL/GenBank/DDBJ databases">
        <title>Complete sequence of chromosome of Shewanella baltica OS185.</title>
        <authorList>
            <consortium name="US DOE Joint Genome Institute"/>
            <person name="Copeland A."/>
            <person name="Lucas S."/>
            <person name="Lapidus A."/>
            <person name="Barry K."/>
            <person name="Glavina del Rio T."/>
            <person name="Dalin E."/>
            <person name="Tice H."/>
            <person name="Pitluck S."/>
            <person name="Sims D."/>
            <person name="Brettin T."/>
            <person name="Bruce D."/>
            <person name="Detter J.C."/>
            <person name="Han C."/>
            <person name="Schmutz J."/>
            <person name="Larimer F."/>
            <person name="Land M."/>
            <person name="Hauser L."/>
            <person name="Kyrpides N."/>
            <person name="Mikhailova N."/>
            <person name="Brettar I."/>
            <person name="Rodrigues J."/>
            <person name="Konstantinidis K."/>
            <person name="Tiedje J."/>
            <person name="Richardson P."/>
        </authorList>
    </citation>
    <scope>NUCLEOTIDE SEQUENCE [LARGE SCALE GENOMIC DNA]</scope>
    <source>
        <strain>OS185</strain>
    </source>
</reference>
<gene>
    <name evidence="1" type="primary">pyrD</name>
    <name type="ordered locus">Shew185_2432</name>
</gene>
<comment type="function">
    <text evidence="1">Catalyzes the conversion of dihydroorotate to orotate with quinone as electron acceptor.</text>
</comment>
<comment type="catalytic activity">
    <reaction evidence="1">
        <text>(S)-dihydroorotate + a quinone = orotate + a quinol</text>
        <dbReference type="Rhea" id="RHEA:30187"/>
        <dbReference type="ChEBI" id="CHEBI:24646"/>
        <dbReference type="ChEBI" id="CHEBI:30839"/>
        <dbReference type="ChEBI" id="CHEBI:30864"/>
        <dbReference type="ChEBI" id="CHEBI:132124"/>
        <dbReference type="EC" id="1.3.5.2"/>
    </reaction>
</comment>
<comment type="cofactor">
    <cofactor evidence="1">
        <name>FMN</name>
        <dbReference type="ChEBI" id="CHEBI:58210"/>
    </cofactor>
    <text evidence="1">Binds 1 FMN per subunit.</text>
</comment>
<comment type="pathway">
    <text evidence="1">Pyrimidine metabolism; UMP biosynthesis via de novo pathway; orotate from (S)-dihydroorotate (quinone route): step 1/1.</text>
</comment>
<comment type="subunit">
    <text evidence="1">Monomer.</text>
</comment>
<comment type="subcellular location">
    <subcellularLocation>
        <location evidence="1">Cell membrane</location>
        <topology evidence="1">Peripheral membrane protein</topology>
    </subcellularLocation>
</comment>
<comment type="similarity">
    <text evidence="1">Belongs to the dihydroorotate dehydrogenase family. Type 2 subfamily.</text>
</comment>
<dbReference type="EC" id="1.3.5.2" evidence="1"/>
<dbReference type="EMBL" id="CP000753">
    <property type="protein sequence ID" value="ABS08569.1"/>
    <property type="molecule type" value="Genomic_DNA"/>
</dbReference>
<dbReference type="RefSeq" id="WP_012089375.1">
    <property type="nucleotide sequence ID" value="NC_009665.1"/>
</dbReference>
<dbReference type="SMR" id="A6WP30"/>
<dbReference type="KEGG" id="sbm:Shew185_2432"/>
<dbReference type="HOGENOM" id="CLU_013640_2_0_6"/>
<dbReference type="UniPathway" id="UPA00070">
    <property type="reaction ID" value="UER00946"/>
</dbReference>
<dbReference type="GO" id="GO:0005737">
    <property type="term" value="C:cytoplasm"/>
    <property type="evidence" value="ECO:0007669"/>
    <property type="project" value="InterPro"/>
</dbReference>
<dbReference type="GO" id="GO:0005886">
    <property type="term" value="C:plasma membrane"/>
    <property type="evidence" value="ECO:0007669"/>
    <property type="project" value="UniProtKB-SubCell"/>
</dbReference>
<dbReference type="GO" id="GO:0106430">
    <property type="term" value="F:dihydroorotate dehydrogenase (quinone) activity"/>
    <property type="evidence" value="ECO:0007669"/>
    <property type="project" value="UniProtKB-EC"/>
</dbReference>
<dbReference type="GO" id="GO:0006207">
    <property type="term" value="P:'de novo' pyrimidine nucleobase biosynthetic process"/>
    <property type="evidence" value="ECO:0007669"/>
    <property type="project" value="InterPro"/>
</dbReference>
<dbReference type="GO" id="GO:0044205">
    <property type="term" value="P:'de novo' UMP biosynthetic process"/>
    <property type="evidence" value="ECO:0007669"/>
    <property type="project" value="UniProtKB-UniRule"/>
</dbReference>
<dbReference type="CDD" id="cd04738">
    <property type="entry name" value="DHOD_2_like"/>
    <property type="match status" value="1"/>
</dbReference>
<dbReference type="FunFam" id="3.20.20.70:FF:000028">
    <property type="entry name" value="Dihydroorotate dehydrogenase (quinone)"/>
    <property type="match status" value="1"/>
</dbReference>
<dbReference type="Gene3D" id="3.20.20.70">
    <property type="entry name" value="Aldolase class I"/>
    <property type="match status" value="1"/>
</dbReference>
<dbReference type="HAMAP" id="MF_00225">
    <property type="entry name" value="DHO_dh_type2"/>
    <property type="match status" value="1"/>
</dbReference>
<dbReference type="InterPro" id="IPR013785">
    <property type="entry name" value="Aldolase_TIM"/>
</dbReference>
<dbReference type="InterPro" id="IPR050074">
    <property type="entry name" value="DHO_dehydrogenase"/>
</dbReference>
<dbReference type="InterPro" id="IPR012135">
    <property type="entry name" value="Dihydroorotate_DH_1_2"/>
</dbReference>
<dbReference type="InterPro" id="IPR005719">
    <property type="entry name" value="Dihydroorotate_DH_2"/>
</dbReference>
<dbReference type="InterPro" id="IPR005720">
    <property type="entry name" value="Dihydroorotate_DH_cat"/>
</dbReference>
<dbReference type="InterPro" id="IPR001295">
    <property type="entry name" value="Dihydroorotate_DH_CS"/>
</dbReference>
<dbReference type="NCBIfam" id="NF003644">
    <property type="entry name" value="PRK05286.1-1"/>
    <property type="match status" value="1"/>
</dbReference>
<dbReference type="NCBIfam" id="NF003645">
    <property type="entry name" value="PRK05286.1-2"/>
    <property type="match status" value="1"/>
</dbReference>
<dbReference type="NCBIfam" id="NF003646">
    <property type="entry name" value="PRK05286.1-4"/>
    <property type="match status" value="1"/>
</dbReference>
<dbReference type="NCBIfam" id="NF003652">
    <property type="entry name" value="PRK05286.2-5"/>
    <property type="match status" value="1"/>
</dbReference>
<dbReference type="NCBIfam" id="TIGR01036">
    <property type="entry name" value="pyrD_sub2"/>
    <property type="match status" value="1"/>
</dbReference>
<dbReference type="PANTHER" id="PTHR48109:SF4">
    <property type="entry name" value="DIHYDROOROTATE DEHYDROGENASE (QUINONE), MITOCHONDRIAL"/>
    <property type="match status" value="1"/>
</dbReference>
<dbReference type="PANTHER" id="PTHR48109">
    <property type="entry name" value="DIHYDROOROTATE DEHYDROGENASE (QUINONE), MITOCHONDRIAL-RELATED"/>
    <property type="match status" value="1"/>
</dbReference>
<dbReference type="Pfam" id="PF01180">
    <property type="entry name" value="DHO_dh"/>
    <property type="match status" value="1"/>
</dbReference>
<dbReference type="PIRSF" id="PIRSF000164">
    <property type="entry name" value="DHO_oxidase"/>
    <property type="match status" value="1"/>
</dbReference>
<dbReference type="SUPFAM" id="SSF51395">
    <property type="entry name" value="FMN-linked oxidoreductases"/>
    <property type="match status" value="1"/>
</dbReference>
<dbReference type="PROSITE" id="PS00911">
    <property type="entry name" value="DHODEHASE_1"/>
    <property type="match status" value="1"/>
</dbReference>
<dbReference type="PROSITE" id="PS00912">
    <property type="entry name" value="DHODEHASE_2"/>
    <property type="match status" value="1"/>
</dbReference>
<name>PYRD_SHEB8</name>
<evidence type="ECO:0000255" key="1">
    <source>
        <dbReference type="HAMAP-Rule" id="MF_00225"/>
    </source>
</evidence>
<protein>
    <recommendedName>
        <fullName evidence="1">Dihydroorotate dehydrogenase (quinone)</fullName>
        <ecNumber evidence="1">1.3.5.2</ecNumber>
    </recommendedName>
    <alternativeName>
        <fullName evidence="1">DHOdehase</fullName>
        <shortName evidence="1">DHOD</shortName>
        <shortName evidence="1">DHODase</shortName>
    </alternativeName>
    <alternativeName>
        <fullName evidence="1">Dihydroorotate oxidase</fullName>
    </alternativeName>
</protein>
<accession>A6WP30</accession>
<organism>
    <name type="scientific">Shewanella baltica (strain OS185)</name>
    <dbReference type="NCBI Taxonomy" id="402882"/>
    <lineage>
        <taxon>Bacteria</taxon>
        <taxon>Pseudomonadati</taxon>
        <taxon>Pseudomonadota</taxon>
        <taxon>Gammaproteobacteria</taxon>
        <taxon>Alteromonadales</taxon>
        <taxon>Shewanellaceae</taxon>
        <taxon>Shewanella</taxon>
    </lineage>
</organism>
<sequence>MFYKIAQKVMFQMDPERAHHLAIGSLKMTANSPLTCLYGQTIAPAPVSVMGLTFPNPVGLAAGMDKDGESIDAFHAMGFGHVEVGTVTPRPQPGNDLPRLFRLKPAKGIINRMGFNNKGVDNLVKNLIAKKTNIMVGVNIGKNKDTPVEQGKDDYLICMDKVYLHAAYIAVNISSPNTPGLRSLQYGDLLDELLSAIKTKQLELAEKHKKYVPIALKIAPDLTIEEIENIAQALIKNKFDGAIATNTTLTRDGVSGLANANESGGLSGKPLTELSTKVIKQLAICLKGQIPIIGVGGINSAEDALAKFDAGATMVQIYSGFIYQGPKLIKEIVNAYRLK</sequence>